<protein>
    <recommendedName>
        <fullName>Uncharacterized 38.6 kDa protein</fullName>
    </recommendedName>
</protein>
<reference key="1">
    <citation type="submission" date="1989-03" db="EMBL/GenBank/DDBJ databases">
        <authorList>
            <person name="Neumann H."/>
        </authorList>
    </citation>
    <scope>NUCLEOTIDE SEQUENCE [GENOMIC DNA]</scope>
</reference>
<organismHost>
    <name type="scientific">Thermoproteus tenax</name>
    <dbReference type="NCBI Taxonomy" id="2271"/>
</organismHost>
<proteinExistence type="predicted"/>
<dbReference type="EMBL" id="X14855">
    <property type="protein sequence ID" value="CAA32993.1"/>
    <property type="molecule type" value="Genomic_DNA"/>
</dbReference>
<dbReference type="SMR" id="P19297"/>
<dbReference type="Proteomes" id="UP000009250">
    <property type="component" value="Genome"/>
</dbReference>
<accession>P19297</accession>
<name>YORM_TTV1K</name>
<feature type="chain" id="PRO_0000222979" description="Uncharacterized 38.6 kDa protein">
    <location>
        <begin position="1"/>
        <end position="352"/>
    </location>
</feature>
<organism>
    <name type="scientific">Thermoproteus tenax virus 1 (strain KRA1)</name>
    <name type="common">TTV1</name>
    <dbReference type="NCBI Taxonomy" id="10480"/>
    <lineage>
        <taxon>Viruses</taxon>
        <taxon>Adnaviria</taxon>
        <taxon>Zilligvirae</taxon>
        <taxon>Taleaviricota</taxon>
        <taxon>Tokiviricetes</taxon>
        <taxon>Primavirales</taxon>
        <taxon>Tristromaviridae</taxon>
        <taxon>Betatristromavirus</taxon>
        <taxon>Betatristromavirus TTV1</taxon>
    </lineage>
</organism>
<sequence length="352" mass="38674">MMLFFTNMIVDGNYTVYEDANLAIYIPPGSDFDYIFTKNGQFILQIIAQGIGVIFQQTVNYTGPGLYKFQVSSGGVITQITPITIDIIIGNNIVIYEFQGIIIPGDQASTMGLTVNEVSYPGQGLFIVQGYPWYMYNPNYPVVFAPIGYTGLFMGIDNVVMERRTVSPTNMFLQPDGKVPYAYQLTITIQNANAQQIIQAFNQAIEFAAGMGAVAYEITSNNQITFYIIFISPTSWWVVALVFVVALALLAAAVFVDKLTKGVAMDMQAQAISNAYNANTQAFQQCISSCYQQTSGRTQCINNCYANYVKVLTMLGAQFGSLNQVLSQPTLSFSGQTNVSVQTNWATVAALR</sequence>
<keyword id="KW-1185">Reference proteome</keyword>